<dbReference type="EMBL" id="Z67753">
    <property type="protein sequence ID" value="CAA91638.1"/>
    <property type="molecule type" value="Genomic_DNA"/>
</dbReference>
<dbReference type="PIR" id="S78265">
    <property type="entry name" value="S78265"/>
</dbReference>
<dbReference type="RefSeq" id="NP_043606.1">
    <property type="nucleotide sequence ID" value="NC_001713.1"/>
</dbReference>
<dbReference type="SMR" id="P49552"/>
<dbReference type="GeneID" id="801822"/>
<dbReference type="GO" id="GO:0009507">
    <property type="term" value="C:chloroplast"/>
    <property type="evidence" value="ECO:0007669"/>
    <property type="project" value="UniProtKB-SubCell"/>
</dbReference>
<dbReference type="GO" id="GO:0005762">
    <property type="term" value="C:mitochondrial large ribosomal subunit"/>
    <property type="evidence" value="ECO:0007669"/>
    <property type="project" value="TreeGrafter"/>
</dbReference>
<dbReference type="GO" id="GO:0070180">
    <property type="term" value="F:large ribosomal subunit rRNA binding"/>
    <property type="evidence" value="ECO:0007669"/>
    <property type="project" value="TreeGrafter"/>
</dbReference>
<dbReference type="GO" id="GO:0003735">
    <property type="term" value="F:structural constituent of ribosome"/>
    <property type="evidence" value="ECO:0007669"/>
    <property type="project" value="InterPro"/>
</dbReference>
<dbReference type="GO" id="GO:0006412">
    <property type="term" value="P:translation"/>
    <property type="evidence" value="ECO:0007669"/>
    <property type="project" value="UniProtKB-UniRule"/>
</dbReference>
<dbReference type="CDD" id="cd00337">
    <property type="entry name" value="Ribosomal_uL14"/>
    <property type="match status" value="1"/>
</dbReference>
<dbReference type="FunFam" id="2.40.150.20:FF:000001">
    <property type="entry name" value="50S ribosomal protein L14"/>
    <property type="match status" value="1"/>
</dbReference>
<dbReference type="Gene3D" id="2.40.150.20">
    <property type="entry name" value="Ribosomal protein L14"/>
    <property type="match status" value="1"/>
</dbReference>
<dbReference type="HAMAP" id="MF_01367">
    <property type="entry name" value="Ribosomal_uL14"/>
    <property type="match status" value="1"/>
</dbReference>
<dbReference type="InterPro" id="IPR000218">
    <property type="entry name" value="Ribosomal_uL14"/>
</dbReference>
<dbReference type="InterPro" id="IPR005745">
    <property type="entry name" value="Ribosomal_uL14_bac-type"/>
</dbReference>
<dbReference type="InterPro" id="IPR019972">
    <property type="entry name" value="Ribosomal_uL14_CS"/>
</dbReference>
<dbReference type="InterPro" id="IPR036853">
    <property type="entry name" value="Ribosomal_uL14_sf"/>
</dbReference>
<dbReference type="NCBIfam" id="TIGR01067">
    <property type="entry name" value="rplN_bact"/>
    <property type="match status" value="1"/>
</dbReference>
<dbReference type="PANTHER" id="PTHR11761">
    <property type="entry name" value="50S/60S RIBOSOMAL PROTEIN L14/L23"/>
    <property type="match status" value="1"/>
</dbReference>
<dbReference type="PANTHER" id="PTHR11761:SF3">
    <property type="entry name" value="LARGE RIBOSOMAL SUBUNIT PROTEIN UL14M"/>
    <property type="match status" value="1"/>
</dbReference>
<dbReference type="Pfam" id="PF00238">
    <property type="entry name" value="Ribosomal_L14"/>
    <property type="match status" value="1"/>
</dbReference>
<dbReference type="SMART" id="SM01374">
    <property type="entry name" value="Ribosomal_L14"/>
    <property type="match status" value="1"/>
</dbReference>
<dbReference type="SUPFAM" id="SSF50193">
    <property type="entry name" value="Ribosomal protein L14"/>
    <property type="match status" value="1"/>
</dbReference>
<dbReference type="PROSITE" id="PS00049">
    <property type="entry name" value="RIBOSOMAL_L14"/>
    <property type="match status" value="1"/>
</dbReference>
<evidence type="ECO:0000255" key="1">
    <source>
        <dbReference type="HAMAP-Rule" id="MF_01367"/>
    </source>
</evidence>
<evidence type="ECO:0000305" key="2"/>
<proteinExistence type="inferred from homology"/>
<organism>
    <name type="scientific">Trieres chinensis</name>
    <name type="common">Marine centric diatom</name>
    <name type="synonym">Odontella sinensis</name>
    <dbReference type="NCBI Taxonomy" id="1514140"/>
    <lineage>
        <taxon>Eukaryota</taxon>
        <taxon>Sar</taxon>
        <taxon>Stramenopiles</taxon>
        <taxon>Ochrophyta</taxon>
        <taxon>Bacillariophyta</taxon>
        <taxon>Mediophyceae</taxon>
        <taxon>Biddulphiophycidae</taxon>
        <taxon>Eupodiscales</taxon>
        <taxon>Parodontellaceae</taxon>
        <taxon>Trieres</taxon>
    </lineage>
</organism>
<sequence length="121" mass="13497">MIYPQTMLTVADNTGARKIMCIRVLGGNRKYAKIGDTIIGVVKEAIPNMPIKRSDIVRAIVVRTSKTIRRPDGMYIRFDDNAAVIVNLDNNPRGTRVFGPVAREIRDKNFSKIVSLAPEVL</sequence>
<accession>P49552</accession>
<feature type="chain" id="PRO_0000128594" description="Large ribosomal subunit protein uL14c">
    <location>
        <begin position="1"/>
        <end position="121"/>
    </location>
</feature>
<name>RK14_TRICV</name>
<comment type="function">
    <text evidence="1">Binds to 23S rRNA.</text>
</comment>
<comment type="subunit">
    <text evidence="1">Part of the 50S ribosomal subunit.</text>
</comment>
<comment type="subcellular location">
    <subcellularLocation>
        <location>Plastid</location>
        <location>Chloroplast</location>
    </subcellularLocation>
</comment>
<comment type="similarity">
    <text evidence="1">Belongs to the universal ribosomal protein uL14 family.</text>
</comment>
<protein>
    <recommendedName>
        <fullName evidence="1">Large ribosomal subunit protein uL14c</fullName>
    </recommendedName>
    <alternativeName>
        <fullName evidence="2">50S ribosomal protein L14, chloroplastic</fullName>
    </alternativeName>
</protein>
<gene>
    <name evidence="1" type="primary">rpl14</name>
</gene>
<reference key="1">
    <citation type="journal article" date="1995" name="Plant Mol. Biol. Rep.">
        <title>The chloroplast genome of a chlorophyll a+c-containing alga, Odontella sinensis.</title>
        <authorList>
            <person name="Kowallik K.V."/>
            <person name="Stoebe B."/>
            <person name="Schaffran I."/>
            <person name="Kroth-Pancic P."/>
            <person name="Freier U."/>
        </authorList>
    </citation>
    <scope>NUCLEOTIDE SEQUENCE [LARGE SCALE GENOMIC DNA]</scope>
</reference>
<keyword id="KW-0150">Chloroplast</keyword>
<keyword id="KW-0934">Plastid</keyword>
<keyword id="KW-0687">Ribonucleoprotein</keyword>
<keyword id="KW-0689">Ribosomal protein</keyword>
<keyword id="KW-0694">RNA-binding</keyword>
<keyword id="KW-0699">rRNA-binding</keyword>
<geneLocation type="chloroplast"/>